<evidence type="ECO:0000250" key="1"/>
<evidence type="ECO:0000250" key="2">
    <source>
        <dbReference type="UniProtKB" id="O74213"/>
    </source>
</evidence>
<evidence type="ECO:0000255" key="3"/>
<evidence type="ECO:0000255" key="4">
    <source>
        <dbReference type="PROSITE-ProRule" id="PRU00498"/>
    </source>
</evidence>
<evidence type="ECO:0000255" key="5">
    <source>
        <dbReference type="PROSITE-ProRule" id="PRU10052"/>
    </source>
</evidence>
<evidence type="ECO:0000305" key="6"/>
<comment type="function">
    <text>May function in the depolymerization of the pectin in its walls during pollen tube elongation, or in that of the pistil during pollination.</text>
</comment>
<comment type="catalytic activity">
    <reaction>
        <text>(1,4-alpha-D-galacturonosyl)n+m + H2O = (1,4-alpha-D-galacturonosyl)n + (1,4-alpha-D-galacturonosyl)m.</text>
        <dbReference type="EC" id="3.2.1.15"/>
    </reaction>
</comment>
<comment type="subcellular location">
    <subcellularLocation>
        <location evidence="1">Secreted</location>
    </subcellularLocation>
    <subcellularLocation>
        <location evidence="1">Secreted</location>
        <location evidence="1">Cell wall</location>
    </subcellularLocation>
</comment>
<comment type="tissue specificity">
    <text>Pollen.</text>
</comment>
<comment type="developmental stage">
    <text>Appears 12 days before anthesis and maximum levels are seen in pollen on the day of anthesis.</text>
</comment>
<comment type="similarity">
    <text evidence="6">Belongs to the glycosyl hydrolase 28 family.</text>
</comment>
<sequence>MAPHLNIVPSMFVLLLLFISASKVQSDAFDVVAKFGAKADGKTDLSKPFLDAWKEACASVTPSTVVIPKGTYLLSKVNLEGPCKAPIEINVQGTIQAPADPSAFKDPNWVRFYSVENFKMFGGGIFDGQGSIAYEKNTCENREFRSKLPVNIRFDFLTNALIQDITSKDSKLFHINVFACKNITLERLKIEAPDESPNTDGIHMGKSEGVNIIASDIKTGDDCISIGDGTKNMVIKEITCGPGHGISIGSLGKFQNEEPVEGIKISNCTITNTSNGARIKTWPGEHGGAVSEIHFEDITMNNVSSPILIDQQYCPWNKCKKNEESKVKLSNISFKNIRGTSALPEAIKFICSGSSPCQNVELADIDIKHNGAEPATSQCLNVKPITSGKLNPIPCSGPVPKTPSATA</sequence>
<organism>
    <name type="scientific">Gossypium hirsutum</name>
    <name type="common">Upland cotton</name>
    <name type="synonym">Gossypium mexicanum</name>
    <dbReference type="NCBI Taxonomy" id="3635"/>
    <lineage>
        <taxon>Eukaryota</taxon>
        <taxon>Viridiplantae</taxon>
        <taxon>Streptophyta</taxon>
        <taxon>Embryophyta</taxon>
        <taxon>Tracheophyta</taxon>
        <taxon>Spermatophyta</taxon>
        <taxon>Magnoliopsida</taxon>
        <taxon>eudicotyledons</taxon>
        <taxon>Gunneridae</taxon>
        <taxon>Pentapetalae</taxon>
        <taxon>rosids</taxon>
        <taxon>malvids</taxon>
        <taxon>Malvales</taxon>
        <taxon>Malvaceae</taxon>
        <taxon>Malvoideae</taxon>
        <taxon>Gossypium</taxon>
    </lineage>
</organism>
<accession>Q39786</accession>
<proteinExistence type="evidence at transcript level"/>
<keyword id="KW-0134">Cell wall</keyword>
<keyword id="KW-0961">Cell wall biogenesis/degradation</keyword>
<keyword id="KW-1015">Disulfide bond</keyword>
<keyword id="KW-0325">Glycoprotein</keyword>
<keyword id="KW-0326">Glycosidase</keyword>
<keyword id="KW-0378">Hydrolase</keyword>
<keyword id="KW-1185">Reference proteome</keyword>
<keyword id="KW-0677">Repeat</keyword>
<keyword id="KW-0964">Secreted</keyword>
<keyword id="KW-0732">Signal</keyword>
<feature type="signal peptide" evidence="3">
    <location>
        <begin position="1"/>
        <end position="26"/>
    </location>
</feature>
<feature type="chain" id="PRO_0000024803" description="Polygalacturonase">
    <location>
        <begin position="27"/>
        <end position="407"/>
    </location>
</feature>
<feature type="repeat" description="PbH1 1" evidence="3">
    <location>
        <begin position="180"/>
        <end position="206"/>
    </location>
</feature>
<feature type="repeat" description="PbH1 2" evidence="3">
    <location>
        <begin position="207"/>
        <end position="228"/>
    </location>
</feature>
<feature type="repeat" description="PbH1 3" evidence="3">
    <location>
        <begin position="260"/>
        <end position="281"/>
    </location>
</feature>
<feature type="repeat" description="PbH1 4" evidence="3">
    <location>
        <begin position="290"/>
        <end position="311"/>
    </location>
</feature>
<feature type="repeat" description="PbH1 5" evidence="3">
    <location>
        <begin position="357"/>
        <end position="384"/>
    </location>
</feature>
<feature type="active site" description="Proton donor" evidence="2">
    <location>
        <position position="221"/>
    </location>
</feature>
<feature type="active site" evidence="5">
    <location>
        <position position="244"/>
    </location>
</feature>
<feature type="glycosylation site" description="N-linked (GlcNAc...) asparagine" evidence="4">
    <location>
        <position position="182"/>
    </location>
</feature>
<feature type="glycosylation site" description="N-linked (GlcNAc...) asparagine" evidence="4">
    <location>
        <position position="267"/>
    </location>
</feature>
<feature type="glycosylation site" description="N-linked (GlcNAc...) asparagine" evidence="4">
    <location>
        <position position="272"/>
    </location>
</feature>
<feature type="glycosylation site" description="N-linked (GlcNAc...) asparagine" evidence="4">
    <location>
        <position position="302"/>
    </location>
</feature>
<feature type="glycosylation site" description="N-linked (GlcNAc...) asparagine" evidence="4">
    <location>
        <position position="331"/>
    </location>
</feature>
<feature type="disulfide bond" evidence="2">
    <location>
        <begin position="223"/>
        <end position="240"/>
    </location>
</feature>
<feature type="disulfide bond" evidence="2">
    <location>
        <begin position="351"/>
        <end position="357"/>
    </location>
</feature>
<feature type="disulfide bond" evidence="2">
    <location>
        <begin position="379"/>
        <end position="395"/>
    </location>
</feature>
<dbReference type="EC" id="3.2.1.15"/>
<dbReference type="EMBL" id="U09717">
    <property type="protein sequence ID" value="AAA82167.1"/>
    <property type="molecule type" value="mRNA"/>
</dbReference>
<dbReference type="PIR" id="S52006">
    <property type="entry name" value="S52006"/>
</dbReference>
<dbReference type="RefSeq" id="NP_001314388.1">
    <property type="nucleotide sequence ID" value="NM_001327459.1"/>
</dbReference>
<dbReference type="SMR" id="Q39786"/>
<dbReference type="STRING" id="3635.Q39786"/>
<dbReference type="CAZy" id="GH28">
    <property type="family name" value="Glycoside Hydrolase Family 28"/>
</dbReference>
<dbReference type="GlyCosmos" id="Q39786">
    <property type="glycosylation" value="5 sites, No reported glycans"/>
</dbReference>
<dbReference type="PaxDb" id="3635-Q39786"/>
<dbReference type="GeneID" id="107942091"/>
<dbReference type="KEGG" id="ghi:107942091"/>
<dbReference type="OrthoDB" id="6579at41938"/>
<dbReference type="Proteomes" id="UP000189702">
    <property type="component" value="Unplaced"/>
</dbReference>
<dbReference type="GO" id="GO:0005576">
    <property type="term" value="C:extracellular region"/>
    <property type="evidence" value="ECO:0007669"/>
    <property type="project" value="UniProtKB-SubCell"/>
</dbReference>
<dbReference type="GO" id="GO:0004650">
    <property type="term" value="F:polygalacturonase activity"/>
    <property type="evidence" value="ECO:0007669"/>
    <property type="project" value="UniProtKB-EC"/>
</dbReference>
<dbReference type="GO" id="GO:0005975">
    <property type="term" value="P:carbohydrate metabolic process"/>
    <property type="evidence" value="ECO:0007669"/>
    <property type="project" value="InterPro"/>
</dbReference>
<dbReference type="GO" id="GO:0071555">
    <property type="term" value="P:cell wall organization"/>
    <property type="evidence" value="ECO:0007669"/>
    <property type="project" value="UniProtKB-KW"/>
</dbReference>
<dbReference type="FunFam" id="2.160.20.10:FF:000004">
    <property type="entry name" value="Pectin lyase-like superfamily protein"/>
    <property type="match status" value="1"/>
</dbReference>
<dbReference type="Gene3D" id="2.160.20.10">
    <property type="entry name" value="Single-stranded right-handed beta-helix, Pectin lyase-like"/>
    <property type="match status" value="1"/>
</dbReference>
<dbReference type="InterPro" id="IPR000743">
    <property type="entry name" value="Glyco_hydro_28"/>
</dbReference>
<dbReference type="InterPro" id="IPR006626">
    <property type="entry name" value="PbH1"/>
</dbReference>
<dbReference type="InterPro" id="IPR012334">
    <property type="entry name" value="Pectin_lyas_fold"/>
</dbReference>
<dbReference type="InterPro" id="IPR011050">
    <property type="entry name" value="Pectin_lyase_fold/virulence"/>
</dbReference>
<dbReference type="PANTHER" id="PTHR31375">
    <property type="match status" value="1"/>
</dbReference>
<dbReference type="Pfam" id="PF00295">
    <property type="entry name" value="Glyco_hydro_28"/>
    <property type="match status" value="1"/>
</dbReference>
<dbReference type="SMART" id="SM00710">
    <property type="entry name" value="PbH1"/>
    <property type="match status" value="5"/>
</dbReference>
<dbReference type="SUPFAM" id="SSF51126">
    <property type="entry name" value="Pectin lyase-like"/>
    <property type="match status" value="1"/>
</dbReference>
<dbReference type="PROSITE" id="PS00502">
    <property type="entry name" value="POLYGALACTURONASE"/>
    <property type="match status" value="1"/>
</dbReference>
<name>PGLR_GOSHI</name>
<protein>
    <recommendedName>
        <fullName>Polygalacturonase</fullName>
        <shortName>PG</shortName>
        <ecNumber>3.2.1.15</ecNumber>
    </recommendedName>
    <alternativeName>
        <fullName>Pectinase</fullName>
    </alternativeName>
</protein>
<gene>
    <name type="primary">G9</name>
</gene>
<reference key="1">
    <citation type="journal article" date="1994" name="Plant Mol. Biol.">
        <title>Cotton (Gossypium hirsutum L.) pollen-specific polygalacturonase mRNA: tissue and temporal specificity of its promoter in transgenic tobacco.</title>
        <authorList>
            <person name="John M.E."/>
            <person name="Petersen M.W."/>
        </authorList>
    </citation>
    <scope>NUCLEOTIDE SEQUENCE [MRNA]</scope>
    <source>
        <strain>cv. Coker 312</strain>
        <tissue>Pollen</tissue>
    </source>
</reference>